<reference key="1">
    <citation type="journal article" date="2002" name="Proc. Natl. Acad. Sci. U.S.A.">
        <title>Extensive mosaic structure revealed by the complete genome sequence of uropathogenic Escherichia coli.</title>
        <authorList>
            <person name="Welch R.A."/>
            <person name="Burland V."/>
            <person name="Plunkett G. III"/>
            <person name="Redford P."/>
            <person name="Roesch P."/>
            <person name="Rasko D."/>
            <person name="Buckles E.L."/>
            <person name="Liou S.-R."/>
            <person name="Boutin A."/>
            <person name="Hackett J."/>
            <person name="Stroud D."/>
            <person name="Mayhew G.F."/>
            <person name="Rose D.J."/>
            <person name="Zhou S."/>
            <person name="Schwartz D.C."/>
            <person name="Perna N.T."/>
            <person name="Mobley H.L.T."/>
            <person name="Donnenberg M.S."/>
            <person name="Blattner F.R."/>
        </authorList>
    </citation>
    <scope>NUCLEOTIDE SEQUENCE [LARGE SCALE GENOMIC DNA]</scope>
    <source>
        <strain>CFT073 / ATCC 700928 / UPEC</strain>
    </source>
</reference>
<evidence type="ECO:0000250" key="1"/>
<evidence type="ECO:0000255" key="2">
    <source>
        <dbReference type="HAMAP-Rule" id="MF_00235"/>
    </source>
</evidence>
<evidence type="ECO:0000305" key="3"/>
<accession>Q8FK84</accession>
<name>KAD_ECOL6</name>
<organism>
    <name type="scientific">Escherichia coli O6:H1 (strain CFT073 / ATCC 700928 / UPEC)</name>
    <dbReference type="NCBI Taxonomy" id="199310"/>
    <lineage>
        <taxon>Bacteria</taxon>
        <taxon>Pseudomonadati</taxon>
        <taxon>Pseudomonadota</taxon>
        <taxon>Gammaproteobacteria</taxon>
        <taxon>Enterobacterales</taxon>
        <taxon>Enterobacteriaceae</taxon>
        <taxon>Escherichia</taxon>
    </lineage>
</organism>
<feature type="chain" id="PRO_0000158769" description="Adenylate kinase">
    <location>
        <begin position="1"/>
        <end position="214"/>
    </location>
</feature>
<feature type="region of interest" description="NMP" evidence="2">
    <location>
        <begin position="30"/>
        <end position="59"/>
    </location>
</feature>
<feature type="region of interest" description="LID">
    <location>
        <begin position="122"/>
        <end position="159"/>
    </location>
</feature>
<feature type="binding site" evidence="2">
    <location>
        <begin position="10"/>
        <end position="15"/>
    </location>
    <ligand>
        <name>ATP</name>
        <dbReference type="ChEBI" id="CHEBI:30616"/>
    </ligand>
</feature>
<feature type="binding site" evidence="2">
    <location>
        <position position="31"/>
    </location>
    <ligand>
        <name>AMP</name>
        <dbReference type="ChEBI" id="CHEBI:456215"/>
    </ligand>
</feature>
<feature type="binding site" evidence="2">
    <location>
        <position position="36"/>
    </location>
    <ligand>
        <name>AMP</name>
        <dbReference type="ChEBI" id="CHEBI:456215"/>
    </ligand>
</feature>
<feature type="binding site" evidence="2">
    <location>
        <begin position="57"/>
        <end position="59"/>
    </location>
    <ligand>
        <name>AMP</name>
        <dbReference type="ChEBI" id="CHEBI:456215"/>
    </ligand>
</feature>
<feature type="binding site" evidence="2">
    <location>
        <begin position="85"/>
        <end position="88"/>
    </location>
    <ligand>
        <name>AMP</name>
        <dbReference type="ChEBI" id="CHEBI:456215"/>
    </ligand>
</feature>
<feature type="binding site" evidence="2">
    <location>
        <position position="92"/>
    </location>
    <ligand>
        <name>AMP</name>
        <dbReference type="ChEBI" id="CHEBI:456215"/>
    </ligand>
</feature>
<feature type="binding site" evidence="2">
    <location>
        <position position="123"/>
    </location>
    <ligand>
        <name>ATP</name>
        <dbReference type="ChEBI" id="CHEBI:30616"/>
    </ligand>
</feature>
<feature type="binding site" evidence="2">
    <location>
        <begin position="132"/>
        <end position="133"/>
    </location>
    <ligand>
        <name>ATP</name>
        <dbReference type="ChEBI" id="CHEBI:30616"/>
    </ligand>
</feature>
<feature type="binding site" evidence="2">
    <location>
        <position position="156"/>
    </location>
    <ligand>
        <name>AMP</name>
        <dbReference type="ChEBI" id="CHEBI:456215"/>
    </ligand>
</feature>
<feature type="binding site" evidence="2">
    <location>
        <position position="167"/>
    </location>
    <ligand>
        <name>AMP</name>
        <dbReference type="ChEBI" id="CHEBI:456215"/>
    </ligand>
</feature>
<feature type="binding site" evidence="2">
    <location>
        <position position="200"/>
    </location>
    <ligand>
        <name>ATP</name>
        <dbReference type="ChEBI" id="CHEBI:30616"/>
    </ligand>
</feature>
<feature type="modified residue" description="N6-acetyllysine" evidence="1">
    <location>
        <position position="192"/>
    </location>
</feature>
<dbReference type="EC" id="2.7.4.3" evidence="2"/>
<dbReference type="EMBL" id="AE014075">
    <property type="protein sequence ID" value="AAN79072.1"/>
    <property type="status" value="ALT_INIT"/>
    <property type="molecule type" value="Genomic_DNA"/>
</dbReference>
<dbReference type="RefSeq" id="WP_001313630.1">
    <property type="nucleotide sequence ID" value="NZ_CP051263.1"/>
</dbReference>
<dbReference type="SMR" id="Q8FK84"/>
<dbReference type="STRING" id="199310.c0594"/>
<dbReference type="GeneID" id="86945388"/>
<dbReference type="KEGG" id="ecc:c0594"/>
<dbReference type="eggNOG" id="COG0563">
    <property type="taxonomic scope" value="Bacteria"/>
</dbReference>
<dbReference type="HOGENOM" id="CLU_032354_1_2_6"/>
<dbReference type="UniPathway" id="UPA00588">
    <property type="reaction ID" value="UER00649"/>
</dbReference>
<dbReference type="Proteomes" id="UP000001410">
    <property type="component" value="Chromosome"/>
</dbReference>
<dbReference type="GO" id="GO:0005737">
    <property type="term" value="C:cytoplasm"/>
    <property type="evidence" value="ECO:0007669"/>
    <property type="project" value="UniProtKB-SubCell"/>
</dbReference>
<dbReference type="GO" id="GO:0004017">
    <property type="term" value="F:adenylate kinase activity"/>
    <property type="evidence" value="ECO:0007669"/>
    <property type="project" value="UniProtKB-UniRule"/>
</dbReference>
<dbReference type="GO" id="GO:0005524">
    <property type="term" value="F:ATP binding"/>
    <property type="evidence" value="ECO:0007669"/>
    <property type="project" value="UniProtKB-UniRule"/>
</dbReference>
<dbReference type="GO" id="GO:0044209">
    <property type="term" value="P:AMP salvage"/>
    <property type="evidence" value="ECO:0007669"/>
    <property type="project" value="UniProtKB-UniRule"/>
</dbReference>
<dbReference type="CDD" id="cd01428">
    <property type="entry name" value="ADK"/>
    <property type="match status" value="1"/>
</dbReference>
<dbReference type="FunFam" id="3.40.50.300:FF:000106">
    <property type="entry name" value="Adenylate kinase mitochondrial"/>
    <property type="match status" value="1"/>
</dbReference>
<dbReference type="Gene3D" id="3.40.50.300">
    <property type="entry name" value="P-loop containing nucleotide triphosphate hydrolases"/>
    <property type="match status" value="1"/>
</dbReference>
<dbReference type="HAMAP" id="MF_00235">
    <property type="entry name" value="Adenylate_kinase_Adk"/>
    <property type="match status" value="1"/>
</dbReference>
<dbReference type="InterPro" id="IPR006259">
    <property type="entry name" value="Adenyl_kin_sub"/>
</dbReference>
<dbReference type="InterPro" id="IPR000850">
    <property type="entry name" value="Adenylat/UMP-CMP_kin"/>
</dbReference>
<dbReference type="InterPro" id="IPR033690">
    <property type="entry name" value="Adenylat_kinase_CS"/>
</dbReference>
<dbReference type="InterPro" id="IPR007862">
    <property type="entry name" value="Adenylate_kinase_lid-dom"/>
</dbReference>
<dbReference type="InterPro" id="IPR027417">
    <property type="entry name" value="P-loop_NTPase"/>
</dbReference>
<dbReference type="NCBIfam" id="TIGR01351">
    <property type="entry name" value="adk"/>
    <property type="match status" value="1"/>
</dbReference>
<dbReference type="NCBIfam" id="NF001379">
    <property type="entry name" value="PRK00279.1-1"/>
    <property type="match status" value="1"/>
</dbReference>
<dbReference type="NCBIfam" id="NF001380">
    <property type="entry name" value="PRK00279.1-2"/>
    <property type="match status" value="1"/>
</dbReference>
<dbReference type="NCBIfam" id="NF001381">
    <property type="entry name" value="PRK00279.1-3"/>
    <property type="match status" value="1"/>
</dbReference>
<dbReference type="NCBIfam" id="NF011100">
    <property type="entry name" value="PRK14527.1"/>
    <property type="match status" value="1"/>
</dbReference>
<dbReference type="PANTHER" id="PTHR23359">
    <property type="entry name" value="NUCLEOTIDE KINASE"/>
    <property type="match status" value="1"/>
</dbReference>
<dbReference type="Pfam" id="PF00406">
    <property type="entry name" value="ADK"/>
    <property type="match status" value="1"/>
</dbReference>
<dbReference type="Pfam" id="PF05191">
    <property type="entry name" value="ADK_lid"/>
    <property type="match status" value="1"/>
</dbReference>
<dbReference type="PRINTS" id="PR00094">
    <property type="entry name" value="ADENYLTKNASE"/>
</dbReference>
<dbReference type="SUPFAM" id="SSF52540">
    <property type="entry name" value="P-loop containing nucleoside triphosphate hydrolases"/>
    <property type="match status" value="1"/>
</dbReference>
<dbReference type="PROSITE" id="PS00113">
    <property type="entry name" value="ADENYLATE_KINASE"/>
    <property type="match status" value="1"/>
</dbReference>
<comment type="function">
    <text evidence="2">Catalyzes the reversible transfer of the terminal phosphate group between ATP and AMP. Plays an important role in cellular energy homeostasis and in adenine nucleotide metabolism.</text>
</comment>
<comment type="catalytic activity">
    <reaction evidence="2">
        <text>AMP + ATP = 2 ADP</text>
        <dbReference type="Rhea" id="RHEA:12973"/>
        <dbReference type="ChEBI" id="CHEBI:30616"/>
        <dbReference type="ChEBI" id="CHEBI:456215"/>
        <dbReference type="ChEBI" id="CHEBI:456216"/>
        <dbReference type="EC" id="2.7.4.3"/>
    </reaction>
</comment>
<comment type="pathway">
    <text evidence="2">Purine metabolism; AMP biosynthesis via salvage pathway; AMP from ADP: step 1/1.</text>
</comment>
<comment type="subunit">
    <text evidence="2">Monomer.</text>
</comment>
<comment type="subcellular location">
    <subcellularLocation>
        <location evidence="2">Cytoplasm</location>
    </subcellularLocation>
</comment>
<comment type="domain">
    <text evidence="2">Consists of three domains, a large central CORE domain and two small peripheral domains, NMPbind and LID, which undergo movements during catalysis. The LID domain closes over the site of phosphoryl transfer upon ATP binding. Assembling and dissambling the active center during each catalytic cycle provides an effective means to prevent ATP hydrolysis.</text>
</comment>
<comment type="similarity">
    <text evidence="2">Belongs to the adenylate kinase family.</text>
</comment>
<comment type="sequence caution" evidence="3">
    <conflict type="erroneous initiation">
        <sequence resource="EMBL-CDS" id="AAN79072"/>
    </conflict>
</comment>
<protein>
    <recommendedName>
        <fullName evidence="2">Adenylate kinase</fullName>
        <shortName evidence="2">AK</shortName>
        <ecNumber evidence="2">2.7.4.3</ecNumber>
    </recommendedName>
    <alternativeName>
        <fullName evidence="2">ATP-AMP transphosphorylase</fullName>
    </alternativeName>
    <alternativeName>
        <fullName evidence="2">ATP:AMP phosphotransferase</fullName>
    </alternativeName>
    <alternativeName>
        <fullName evidence="2">Adenylate monophosphate kinase</fullName>
    </alternativeName>
</protein>
<gene>
    <name evidence="2" type="primary">adk</name>
    <name type="ordered locus">c0594</name>
</gene>
<sequence>MRIILLGAPGAGKGTQAQFIMEKYGIPQISTGDMLRAAVKSGSELGKQAKDIMDAGKLVTDELVIALVKERIAQEDCRNGFLLDGFPRTIPQADAMKEAGINVDYVLEFDVPDELIVDRIVGRRVHAPSGRVYHVKFNPPKVEGKDDVTGEELTTRKDDQEETVRKRLVEYHQMTAPLIGYYSKEAEAGNTKYAKVDGTKPVAEVRAALEKILG</sequence>
<keyword id="KW-0007">Acetylation</keyword>
<keyword id="KW-0067">ATP-binding</keyword>
<keyword id="KW-0963">Cytoplasm</keyword>
<keyword id="KW-0418">Kinase</keyword>
<keyword id="KW-0545">Nucleotide biosynthesis</keyword>
<keyword id="KW-0547">Nucleotide-binding</keyword>
<keyword id="KW-1185">Reference proteome</keyword>
<keyword id="KW-0808">Transferase</keyword>
<proteinExistence type="inferred from homology"/>